<keyword id="KW-0002">3D-structure</keyword>
<keyword id="KW-0007">Acetylation</keyword>
<keyword id="KW-0025">Alternative splicing</keyword>
<keyword id="KW-0539">Nucleus</keyword>
<keyword id="KW-0597">Phosphoprotein</keyword>
<keyword id="KW-1267">Proteomics identification</keyword>
<keyword id="KW-1185">Reference proteome</keyword>
<keyword id="KW-0833">Ubl conjugation pathway</keyword>
<sequence>MEEMSGESVVSSAVPAAATRTTSFKGTSPSSKYVKLNVGGALYYTTMQTLTKQDTMLKAMFSGRMEVLTDSEGWILIDRCGKHFGTILNYLRDGAVPLPESRREIEELLAEAKYYLVQGLVEECQAALQNKDTYEPFCKVPVITSSKEEQKLIATSNKPAVKLLYNRSNNKYSYTSNSDDNMLKNIELFDKLSLRFNGRVLFIKDVIGDEICCWSFYGQGRKIAEVCCTSIVYATEKKQTKVEFPEARIYEETLNILLYEAQDGRGPDNALLEATGGAAGRSHHLDEDEERERIERVRRIHIKRPDDRAHLHQ</sequence>
<feature type="chain" id="PRO_0000247421" description="BTB/POZ domain-containing adapter for CUL3-mediated RhoA degradation protein 3">
    <location>
        <begin position="1"/>
        <end position="313"/>
    </location>
</feature>
<feature type="domain" description="BTB" evidence="4">
    <location>
        <begin position="32"/>
        <end position="100"/>
    </location>
</feature>
<feature type="short sequence motif" description="PCNA-binding" evidence="1">
    <location>
        <begin position="239"/>
        <end position="245"/>
    </location>
</feature>
<feature type="modified residue" description="N-acetylmethionine" evidence="12">
    <location>
        <position position="1"/>
    </location>
</feature>
<feature type="modified residue" description="Phosphoserine" evidence="11 13">
    <location>
        <position position="23"/>
    </location>
</feature>
<feature type="splice variant" id="VSP_019978" description="In isoform 3." evidence="9">
    <location>
        <begin position="1"/>
        <end position="158"/>
    </location>
</feature>
<feature type="splice variant" id="VSP_019979" description="In isoform 3." evidence="9">
    <original>PAVKLLYNRSNNKYSYT</original>
    <variation>MMAVFTSLWSPYQMLFC</variation>
    <location>
        <begin position="159"/>
        <end position="175"/>
    </location>
</feature>
<feature type="splice variant" id="VSP_019980" description="In isoform 2." evidence="8">
    <location>
        <begin position="176"/>
        <end position="198"/>
    </location>
</feature>
<feature type="sequence conflict" description="In Ref. 4; BAB55188." evidence="10" ref="4">
    <original>M</original>
    <variation>V</variation>
    <location>
        <position position="1"/>
    </location>
</feature>
<feature type="sequence conflict" description="In Ref. 3; AAT09002." evidence="10" ref="3">
    <original>L</original>
    <variation>P</variation>
    <location>
        <position position="68"/>
    </location>
</feature>
<feature type="sequence conflict" description="In Ref. 6; BAD96268." evidence="10" ref="6">
    <original>N</original>
    <variation>T</variation>
    <location>
        <position position="170"/>
    </location>
</feature>
<feature type="strand" evidence="14">
    <location>
        <begin position="33"/>
        <end position="38"/>
    </location>
</feature>
<feature type="strand" evidence="14">
    <location>
        <begin position="41"/>
        <end position="46"/>
    </location>
</feature>
<feature type="helix" evidence="14">
    <location>
        <begin position="47"/>
        <end position="50"/>
    </location>
</feature>
<feature type="strand" evidence="14">
    <location>
        <begin position="52"/>
        <end position="55"/>
    </location>
</feature>
<feature type="helix" evidence="14">
    <location>
        <begin position="56"/>
        <end position="61"/>
    </location>
</feature>
<feature type="strand" evidence="14">
    <location>
        <begin position="75"/>
        <end position="77"/>
    </location>
</feature>
<feature type="helix" evidence="14">
    <location>
        <begin position="84"/>
        <end position="93"/>
    </location>
</feature>
<feature type="helix" evidence="14">
    <location>
        <begin position="102"/>
        <end position="114"/>
    </location>
</feature>
<feature type="helix" evidence="14">
    <location>
        <begin position="118"/>
        <end position="127"/>
    </location>
</feature>
<organism>
    <name type="scientific">Homo sapiens</name>
    <name type="common">Human</name>
    <dbReference type="NCBI Taxonomy" id="9606"/>
    <lineage>
        <taxon>Eukaryota</taxon>
        <taxon>Metazoa</taxon>
        <taxon>Chordata</taxon>
        <taxon>Craniata</taxon>
        <taxon>Vertebrata</taxon>
        <taxon>Euteleostomi</taxon>
        <taxon>Mammalia</taxon>
        <taxon>Eutheria</taxon>
        <taxon>Euarchontoglires</taxon>
        <taxon>Primates</taxon>
        <taxon>Haplorrhini</taxon>
        <taxon>Catarrhini</taxon>
        <taxon>Hominidae</taxon>
        <taxon>Homo</taxon>
    </lineage>
</organism>
<comment type="function">
    <text evidence="3">Substrate-specific adapter of a BCR (BTB-CUL3-RBX1) E3 ubiquitin-protein ligase complex. The BCR(BACURD3) E3 ubiquitin ligase complex mediates the ubiquitination of target proteins, leading to their degradation by the proteasome (By similarity).</text>
</comment>
<comment type="pathway">
    <text>Protein modification; protein ubiquitination.</text>
</comment>
<comment type="subunit">
    <text evidence="2 3 5 6">Homotetramer; forms a two-fold symmetric tetramer in solution (PubMed:28963344). Interacts with CUL3; interaction is direct and forms a 5:5 heterodecamer (PubMed:28963344). Component of the BCR(BACURD3) E3 ubiquitin ligase complex, at least composed of CUL3, KCTD10/BACURD3 and RBX1 (By similarity). Interacts with DNA polymerase delta subunit 2/POLD2 (By similarity). Interacts with PCNA (PubMed:19125419).</text>
</comment>
<comment type="interaction">
    <interactant intactId="EBI-2505886">
        <id>Q9H3F6</id>
    </interactant>
    <interactant intactId="EBI-456129">
        <id>Q13618</id>
        <label>CUL3</label>
    </interactant>
    <organismsDiffer>false</organismsDiffer>
    <experiments>8</experiments>
</comment>
<comment type="interaction">
    <interactant intactId="EBI-2505886">
        <id>Q9H3F6</id>
    </interactant>
    <interactant intactId="EBI-739789">
        <id>Q92997</id>
        <label>DVL3</label>
    </interactant>
    <organismsDiffer>false</organismsDiffer>
    <experiments>3</experiments>
</comment>
<comment type="interaction">
    <interactant intactId="EBI-2505886">
        <id>Q9H3F6</id>
    </interactant>
    <interactant intactId="EBI-2505886">
        <id>Q9H3F6</id>
        <label>KCTD10</label>
    </interactant>
    <organismsDiffer>false</organismsDiffer>
    <experiments>3</experiments>
</comment>
<comment type="interaction">
    <interactant intactId="EBI-2505886">
        <id>Q9H3F6</id>
    </interactant>
    <interactant intactId="EBI-742916">
        <id>Q8WZ19</id>
        <label>KCTD13</label>
    </interactant>
    <organismsDiffer>false</organismsDiffer>
    <experiments>6</experiments>
</comment>
<comment type="interaction">
    <interactant intactId="EBI-2505886">
        <id>Q9H3F6</id>
    </interactant>
    <interactant intactId="EBI-741158">
        <id>Q96HA8</id>
        <label>NTAQ1</label>
    </interactant>
    <organismsDiffer>false</organismsDiffer>
    <experiments>3</experiments>
</comment>
<comment type="interaction">
    <interactant intactId="EBI-2505886">
        <id>Q9H3F6</id>
    </interactant>
    <interactant intactId="EBI-710310">
        <id>Q15560</id>
        <label>TCEA2</label>
    </interactant>
    <organismsDiffer>false</organismsDiffer>
    <experiments>3</experiments>
</comment>
<comment type="interaction">
    <interactant intactId="EBI-2505886">
        <id>Q9H3F6</id>
    </interactant>
    <interactant intactId="EBI-11523345">
        <id>Q8IYF3-3</id>
        <label>TEX11</label>
    </interactant>
    <organismsDiffer>false</organismsDiffer>
    <experiments>3</experiments>
</comment>
<comment type="interaction">
    <interactant intactId="EBI-2505886">
        <id>Q9H3F6</id>
    </interactant>
    <interactant intactId="EBI-2505861">
        <id>Q13829</id>
        <label>TNFAIP1</label>
    </interactant>
    <organismsDiffer>false</organismsDiffer>
    <experiments>8</experiments>
</comment>
<comment type="subcellular location">
    <subcellularLocation>
        <location evidence="5">Nucleus</location>
    </subcellularLocation>
</comment>
<comment type="alternative products">
    <event type="alternative splicing"/>
    <isoform>
        <id>Q9H3F6-1</id>
        <name>1</name>
        <sequence type="displayed"/>
    </isoform>
    <isoform>
        <id>Q9H3F6-2</id>
        <name>2</name>
        <sequence type="described" ref="VSP_019980"/>
    </isoform>
    <isoform>
        <id>Q9H3F6-3</id>
        <name>3</name>
        <sequence type="described" ref="VSP_019978 VSP_019979"/>
    </isoform>
</comment>
<comment type="similarity">
    <text evidence="10">Belongs to the BACURD family.</text>
</comment>
<comment type="sequence caution" evidence="10">
    <conflict type="erroneous initiation">
        <sequence resource="EMBL-CDS" id="BAB55188"/>
    </conflict>
    <text>Truncated N-terminus.</text>
</comment>
<comment type="sequence caution" evidence="10">
    <conflict type="erroneous initiation">
        <sequence resource="EMBL-CDS" id="BAD92595"/>
    </conflict>
    <text>Extended N-terminus.</text>
</comment>
<evidence type="ECO:0000250" key="1"/>
<evidence type="ECO:0000250" key="2">
    <source>
        <dbReference type="UniProtKB" id="Q7TPL3"/>
    </source>
</evidence>
<evidence type="ECO:0000250" key="3">
    <source>
        <dbReference type="UniProtKB" id="Q8WZ19"/>
    </source>
</evidence>
<evidence type="ECO:0000255" key="4">
    <source>
        <dbReference type="PROSITE-ProRule" id="PRU00037"/>
    </source>
</evidence>
<evidence type="ECO:0000269" key="5">
    <source>
    </source>
</evidence>
<evidence type="ECO:0000269" key="6">
    <source>
    </source>
</evidence>
<evidence type="ECO:0000303" key="7">
    <source>
    </source>
</evidence>
<evidence type="ECO:0000303" key="8">
    <source ref="3"/>
</evidence>
<evidence type="ECO:0000303" key="9">
    <source ref="5"/>
</evidence>
<evidence type="ECO:0000305" key="10"/>
<evidence type="ECO:0007744" key="11">
    <source>
    </source>
</evidence>
<evidence type="ECO:0007744" key="12">
    <source>
    </source>
</evidence>
<evidence type="ECO:0007744" key="13">
    <source>
    </source>
</evidence>
<evidence type="ECO:0007829" key="14">
    <source>
        <dbReference type="PDB" id="5FTA"/>
    </source>
</evidence>
<proteinExistence type="evidence at protein level"/>
<protein>
    <recommendedName>
        <fullName evidence="7">BTB/POZ domain-containing adapter for CUL3-mediated RhoA degradation protein 3</fullName>
        <shortName evidence="7">hBACURD3</shortName>
    </recommendedName>
    <alternativeName>
        <fullName>BTB/POZ domain-containing protein KCTD10</fullName>
    </alternativeName>
    <alternativeName>
        <fullName>Potassium channel tetramerization domain-containing protein 10</fullName>
    </alternativeName>
</protein>
<name>BACD3_HUMAN</name>
<reference key="1">
    <citation type="submission" date="2002-12" db="EMBL/GenBank/DDBJ databases">
        <title>Identification and characterization of a human uterine leiomyoma related gene through bioinformatics.</title>
        <authorList>
            <person name="Li B."/>
            <person name="Hu Z.-H."/>
            <person name="Yang J."/>
            <person name="Zhang Y.-L."/>
        </authorList>
    </citation>
    <scope>NUCLEOTIDE SEQUENCE [MRNA] (ISOFORM 1)</scope>
    <source>
        <tissue>Uterine leiomyoma</tissue>
    </source>
</reference>
<reference key="2">
    <citation type="submission" date="1998-12" db="EMBL/GenBank/DDBJ databases">
        <authorList>
            <person name="Liu B."/>
            <person name="Liu Y.Q."/>
            <person name="Wang X.Y."/>
            <person name="Zhao B."/>
            <person name="Sheng H."/>
            <person name="Zhao X.W."/>
            <person name="Liu S."/>
            <person name="Xu Y.Y."/>
            <person name="Ye J."/>
            <person name="Song L."/>
            <person name="Gao Y."/>
            <person name="Zhang C.L."/>
            <person name="Zhang J."/>
            <person name="Wei Y.J."/>
            <person name="Cao H.Q."/>
            <person name="Zhao Y."/>
            <person name="Liu L.S."/>
            <person name="Ding J.F."/>
            <person name="Gao R.L."/>
            <person name="Wu Q.Y."/>
            <person name="Qiang B.Q."/>
            <person name="Yuan J.G."/>
            <person name="Liew C.C."/>
            <person name="Zhao M.S."/>
            <person name="Hui R.T."/>
        </authorList>
    </citation>
    <scope>NUCLEOTIDE SEQUENCE [LARGE SCALE MRNA] (ISOFORM 1)</scope>
    <source>
        <tissue>Aorta</tissue>
    </source>
</reference>
<reference key="3">
    <citation type="submission" date="2004-04" db="EMBL/GenBank/DDBJ databases">
        <authorList>
            <person name="Li H."/>
            <person name="Zhong G."/>
            <person name="Ke R."/>
            <person name="Shen C."/>
            <person name="Zhou G."/>
            <person name="Lin L."/>
            <person name="Yang S."/>
        </authorList>
    </citation>
    <scope>NUCLEOTIDE SEQUENCE [LARGE SCALE MRNA] (ISOFORM 2)</scope>
</reference>
<reference key="4">
    <citation type="journal article" date="2004" name="Nat. Genet.">
        <title>Complete sequencing and characterization of 21,243 full-length human cDNAs.</title>
        <authorList>
            <person name="Ota T."/>
            <person name="Suzuki Y."/>
            <person name="Nishikawa T."/>
            <person name="Otsuki T."/>
            <person name="Sugiyama T."/>
            <person name="Irie R."/>
            <person name="Wakamatsu A."/>
            <person name="Hayashi K."/>
            <person name="Sato H."/>
            <person name="Nagai K."/>
            <person name="Kimura K."/>
            <person name="Makita H."/>
            <person name="Sekine M."/>
            <person name="Obayashi M."/>
            <person name="Nishi T."/>
            <person name="Shibahara T."/>
            <person name="Tanaka T."/>
            <person name="Ishii S."/>
            <person name="Yamamoto J."/>
            <person name="Saito K."/>
            <person name="Kawai Y."/>
            <person name="Isono Y."/>
            <person name="Nakamura Y."/>
            <person name="Nagahari K."/>
            <person name="Murakami K."/>
            <person name="Yasuda T."/>
            <person name="Iwayanagi T."/>
            <person name="Wagatsuma M."/>
            <person name="Shiratori A."/>
            <person name="Sudo H."/>
            <person name="Hosoiri T."/>
            <person name="Kaku Y."/>
            <person name="Kodaira H."/>
            <person name="Kondo H."/>
            <person name="Sugawara M."/>
            <person name="Takahashi M."/>
            <person name="Kanda K."/>
            <person name="Yokoi T."/>
            <person name="Furuya T."/>
            <person name="Kikkawa E."/>
            <person name="Omura Y."/>
            <person name="Abe K."/>
            <person name="Kamihara K."/>
            <person name="Katsuta N."/>
            <person name="Sato K."/>
            <person name="Tanikawa M."/>
            <person name="Yamazaki M."/>
            <person name="Ninomiya K."/>
            <person name="Ishibashi T."/>
            <person name="Yamashita H."/>
            <person name="Murakawa K."/>
            <person name="Fujimori K."/>
            <person name="Tanai H."/>
            <person name="Kimata M."/>
            <person name="Watanabe M."/>
            <person name="Hiraoka S."/>
            <person name="Chiba Y."/>
            <person name="Ishida S."/>
            <person name="Ono Y."/>
            <person name="Takiguchi S."/>
            <person name="Watanabe S."/>
            <person name="Yosida M."/>
            <person name="Hotuta T."/>
            <person name="Kusano J."/>
            <person name="Kanehori K."/>
            <person name="Takahashi-Fujii A."/>
            <person name="Hara H."/>
            <person name="Tanase T.-O."/>
            <person name="Nomura Y."/>
            <person name="Togiya S."/>
            <person name="Komai F."/>
            <person name="Hara R."/>
            <person name="Takeuchi K."/>
            <person name="Arita M."/>
            <person name="Imose N."/>
            <person name="Musashino K."/>
            <person name="Yuuki H."/>
            <person name="Oshima A."/>
            <person name="Sasaki N."/>
            <person name="Aotsuka S."/>
            <person name="Yoshikawa Y."/>
            <person name="Matsunawa H."/>
            <person name="Ichihara T."/>
            <person name="Shiohata N."/>
            <person name="Sano S."/>
            <person name="Moriya S."/>
            <person name="Momiyama H."/>
            <person name="Satoh N."/>
            <person name="Takami S."/>
            <person name="Terashima Y."/>
            <person name="Suzuki O."/>
            <person name="Nakagawa S."/>
            <person name="Senoh A."/>
            <person name="Mizoguchi H."/>
            <person name="Goto Y."/>
            <person name="Shimizu F."/>
            <person name="Wakebe H."/>
            <person name="Hishigaki H."/>
            <person name="Watanabe T."/>
            <person name="Sugiyama A."/>
            <person name="Takemoto M."/>
            <person name="Kawakami B."/>
            <person name="Yamazaki M."/>
            <person name="Watanabe K."/>
            <person name="Kumagai A."/>
            <person name="Itakura S."/>
            <person name="Fukuzumi Y."/>
            <person name="Fujimori Y."/>
            <person name="Komiyama M."/>
            <person name="Tashiro H."/>
            <person name="Tanigami A."/>
            <person name="Fujiwara T."/>
            <person name="Ono T."/>
            <person name="Yamada K."/>
            <person name="Fujii Y."/>
            <person name="Ozaki K."/>
            <person name="Hirao M."/>
            <person name="Ohmori Y."/>
            <person name="Kawabata A."/>
            <person name="Hikiji T."/>
            <person name="Kobatake N."/>
            <person name="Inagaki H."/>
            <person name="Ikema Y."/>
            <person name="Okamoto S."/>
            <person name="Okitani R."/>
            <person name="Kawakami T."/>
            <person name="Noguchi S."/>
            <person name="Itoh T."/>
            <person name="Shigeta K."/>
            <person name="Senba T."/>
            <person name="Matsumura K."/>
            <person name="Nakajima Y."/>
            <person name="Mizuno T."/>
            <person name="Morinaga M."/>
            <person name="Sasaki M."/>
            <person name="Togashi T."/>
            <person name="Oyama M."/>
            <person name="Hata H."/>
            <person name="Watanabe M."/>
            <person name="Komatsu T."/>
            <person name="Mizushima-Sugano J."/>
            <person name="Satoh T."/>
            <person name="Shirai Y."/>
            <person name="Takahashi Y."/>
            <person name="Nakagawa K."/>
            <person name="Okumura K."/>
            <person name="Nagase T."/>
            <person name="Nomura N."/>
            <person name="Kikuchi H."/>
            <person name="Masuho Y."/>
            <person name="Yamashita R."/>
            <person name="Nakai K."/>
            <person name="Yada T."/>
            <person name="Nakamura Y."/>
            <person name="Ohara O."/>
            <person name="Isogai T."/>
            <person name="Sugano S."/>
        </authorList>
    </citation>
    <scope>NUCLEOTIDE SEQUENCE [LARGE SCALE MRNA] (ISOFORM 1)</scope>
</reference>
<reference key="5">
    <citation type="submission" date="2005-03" db="EMBL/GenBank/DDBJ databases">
        <authorList>
            <person name="Totoki Y."/>
            <person name="Toyoda A."/>
            <person name="Takeda T."/>
            <person name="Sakaki Y."/>
            <person name="Tanaka A."/>
            <person name="Yokoyama S."/>
            <person name="Ohara O."/>
            <person name="Nagase T."/>
            <person name="Kikuno R.F."/>
        </authorList>
    </citation>
    <scope>NUCLEOTIDE SEQUENCE [LARGE SCALE MRNA] (ISOFORM 3)</scope>
    <source>
        <tissue>Brain</tissue>
    </source>
</reference>
<reference key="6">
    <citation type="submission" date="2005-04" db="EMBL/GenBank/DDBJ databases">
        <authorList>
            <person name="Suzuki Y."/>
            <person name="Sugano S."/>
            <person name="Totoki Y."/>
            <person name="Toyoda A."/>
            <person name="Takeda T."/>
            <person name="Sakaki Y."/>
            <person name="Tanaka A."/>
            <person name="Yokoyama S."/>
        </authorList>
    </citation>
    <scope>NUCLEOTIDE SEQUENCE [LARGE SCALE MRNA] (ISOFORM 1)</scope>
    <source>
        <tissue>Coronary artery</tissue>
    </source>
</reference>
<reference key="7">
    <citation type="journal article" date="2006" name="Nature">
        <title>The finished DNA sequence of human chromosome 12.</title>
        <authorList>
            <person name="Scherer S.E."/>
            <person name="Muzny D.M."/>
            <person name="Buhay C.J."/>
            <person name="Chen R."/>
            <person name="Cree A."/>
            <person name="Ding Y."/>
            <person name="Dugan-Rocha S."/>
            <person name="Gill R."/>
            <person name="Gunaratne P."/>
            <person name="Harris R.A."/>
            <person name="Hawes A.C."/>
            <person name="Hernandez J."/>
            <person name="Hodgson A.V."/>
            <person name="Hume J."/>
            <person name="Jackson A."/>
            <person name="Khan Z.M."/>
            <person name="Kovar-Smith C."/>
            <person name="Lewis L.R."/>
            <person name="Lozado R.J."/>
            <person name="Metzker M.L."/>
            <person name="Milosavljevic A."/>
            <person name="Miner G.R."/>
            <person name="Montgomery K.T."/>
            <person name="Morgan M.B."/>
            <person name="Nazareth L.V."/>
            <person name="Scott G."/>
            <person name="Sodergren E."/>
            <person name="Song X.-Z."/>
            <person name="Steffen D."/>
            <person name="Lovering R.C."/>
            <person name="Wheeler D.A."/>
            <person name="Worley K.C."/>
            <person name="Yuan Y."/>
            <person name="Zhang Z."/>
            <person name="Adams C.Q."/>
            <person name="Ansari-Lari M.A."/>
            <person name="Ayele M."/>
            <person name="Brown M.J."/>
            <person name="Chen G."/>
            <person name="Chen Z."/>
            <person name="Clerc-Blankenburg K.P."/>
            <person name="Davis C."/>
            <person name="Delgado O."/>
            <person name="Dinh H.H."/>
            <person name="Draper H."/>
            <person name="Gonzalez-Garay M.L."/>
            <person name="Havlak P."/>
            <person name="Jackson L.R."/>
            <person name="Jacob L.S."/>
            <person name="Kelly S.H."/>
            <person name="Li L."/>
            <person name="Li Z."/>
            <person name="Liu J."/>
            <person name="Liu W."/>
            <person name="Lu J."/>
            <person name="Maheshwari M."/>
            <person name="Nguyen B.-V."/>
            <person name="Okwuonu G.O."/>
            <person name="Pasternak S."/>
            <person name="Perez L.M."/>
            <person name="Plopper F.J.H."/>
            <person name="Santibanez J."/>
            <person name="Shen H."/>
            <person name="Tabor P.E."/>
            <person name="Verduzco D."/>
            <person name="Waldron L."/>
            <person name="Wang Q."/>
            <person name="Williams G.A."/>
            <person name="Zhang J."/>
            <person name="Zhou J."/>
            <person name="Allen C.C."/>
            <person name="Amin A.G."/>
            <person name="Anyalebechi V."/>
            <person name="Bailey M."/>
            <person name="Barbaria J.A."/>
            <person name="Bimage K.E."/>
            <person name="Bryant N.P."/>
            <person name="Burch P.E."/>
            <person name="Burkett C.E."/>
            <person name="Burrell K.L."/>
            <person name="Calderon E."/>
            <person name="Cardenas V."/>
            <person name="Carter K."/>
            <person name="Casias K."/>
            <person name="Cavazos I."/>
            <person name="Cavazos S.R."/>
            <person name="Ceasar H."/>
            <person name="Chacko J."/>
            <person name="Chan S.N."/>
            <person name="Chavez D."/>
            <person name="Christopoulos C."/>
            <person name="Chu J."/>
            <person name="Cockrell R."/>
            <person name="Cox C.D."/>
            <person name="Dang M."/>
            <person name="Dathorne S.R."/>
            <person name="David R."/>
            <person name="Davis C.M."/>
            <person name="Davy-Carroll L."/>
            <person name="Deshazo D.R."/>
            <person name="Donlin J.E."/>
            <person name="D'Souza L."/>
            <person name="Eaves K.A."/>
            <person name="Egan A."/>
            <person name="Emery-Cohen A.J."/>
            <person name="Escotto M."/>
            <person name="Flagg N."/>
            <person name="Forbes L.D."/>
            <person name="Gabisi A.M."/>
            <person name="Garza M."/>
            <person name="Hamilton C."/>
            <person name="Henderson N."/>
            <person name="Hernandez O."/>
            <person name="Hines S."/>
            <person name="Hogues M.E."/>
            <person name="Huang M."/>
            <person name="Idlebird D.G."/>
            <person name="Johnson R."/>
            <person name="Jolivet A."/>
            <person name="Jones S."/>
            <person name="Kagan R."/>
            <person name="King L.M."/>
            <person name="Leal B."/>
            <person name="Lebow H."/>
            <person name="Lee S."/>
            <person name="LeVan J.M."/>
            <person name="Lewis L.C."/>
            <person name="London P."/>
            <person name="Lorensuhewa L.M."/>
            <person name="Loulseged H."/>
            <person name="Lovett D.A."/>
            <person name="Lucier A."/>
            <person name="Lucier R.L."/>
            <person name="Ma J."/>
            <person name="Madu R.C."/>
            <person name="Mapua P."/>
            <person name="Martindale A.D."/>
            <person name="Martinez E."/>
            <person name="Massey E."/>
            <person name="Mawhiney S."/>
            <person name="Meador M.G."/>
            <person name="Mendez S."/>
            <person name="Mercado C."/>
            <person name="Mercado I.C."/>
            <person name="Merritt C.E."/>
            <person name="Miner Z.L."/>
            <person name="Minja E."/>
            <person name="Mitchell T."/>
            <person name="Mohabbat F."/>
            <person name="Mohabbat K."/>
            <person name="Montgomery B."/>
            <person name="Moore N."/>
            <person name="Morris S."/>
            <person name="Munidasa M."/>
            <person name="Ngo R.N."/>
            <person name="Nguyen N.B."/>
            <person name="Nickerson E."/>
            <person name="Nwaokelemeh O.O."/>
            <person name="Nwokenkwo S."/>
            <person name="Obregon M."/>
            <person name="Oguh M."/>
            <person name="Oragunye N."/>
            <person name="Oviedo R.J."/>
            <person name="Parish B.J."/>
            <person name="Parker D.N."/>
            <person name="Parrish J."/>
            <person name="Parks K.L."/>
            <person name="Paul H.A."/>
            <person name="Payton B.A."/>
            <person name="Perez A."/>
            <person name="Perrin W."/>
            <person name="Pickens A."/>
            <person name="Primus E.L."/>
            <person name="Pu L.-L."/>
            <person name="Puazo M."/>
            <person name="Quiles M.M."/>
            <person name="Quiroz J.B."/>
            <person name="Rabata D."/>
            <person name="Reeves K."/>
            <person name="Ruiz S.J."/>
            <person name="Shao H."/>
            <person name="Sisson I."/>
            <person name="Sonaike T."/>
            <person name="Sorelle R.P."/>
            <person name="Sutton A.E."/>
            <person name="Svatek A.F."/>
            <person name="Svetz L.A."/>
            <person name="Tamerisa K.S."/>
            <person name="Taylor T.R."/>
            <person name="Teague B."/>
            <person name="Thomas N."/>
            <person name="Thorn R.D."/>
            <person name="Trejos Z.Y."/>
            <person name="Trevino B.K."/>
            <person name="Ukegbu O.N."/>
            <person name="Urban J.B."/>
            <person name="Vasquez L.I."/>
            <person name="Vera V.A."/>
            <person name="Villasana D.M."/>
            <person name="Wang L."/>
            <person name="Ward-Moore S."/>
            <person name="Warren J.T."/>
            <person name="Wei X."/>
            <person name="White F."/>
            <person name="Williamson A.L."/>
            <person name="Wleczyk R."/>
            <person name="Wooden H.S."/>
            <person name="Wooden S.H."/>
            <person name="Yen J."/>
            <person name="Yoon L."/>
            <person name="Yoon V."/>
            <person name="Zorrilla S.E."/>
            <person name="Nelson D."/>
            <person name="Kucherlapati R."/>
            <person name="Weinstock G."/>
            <person name="Gibbs R.A."/>
        </authorList>
    </citation>
    <scope>NUCLEOTIDE SEQUENCE [LARGE SCALE GENOMIC DNA]</scope>
</reference>
<reference key="8">
    <citation type="journal article" date="2004" name="Genome Res.">
        <title>The status, quality, and expansion of the NIH full-length cDNA project: the Mammalian Gene Collection (MGC).</title>
        <authorList>
            <consortium name="The MGC Project Team"/>
        </authorList>
    </citation>
    <scope>NUCLEOTIDE SEQUENCE [LARGE SCALE MRNA] (ISOFORM 1)</scope>
    <source>
        <tissue>Eye</tissue>
    </source>
</reference>
<reference key="9">
    <citation type="journal article" date="2008" name="Proc. Natl. Acad. Sci. U.S.A.">
        <title>A quantitative atlas of mitotic phosphorylation.</title>
        <authorList>
            <person name="Dephoure N."/>
            <person name="Zhou C."/>
            <person name="Villen J."/>
            <person name="Beausoleil S.A."/>
            <person name="Bakalarski C.E."/>
            <person name="Elledge S.J."/>
            <person name="Gygi S.P."/>
        </authorList>
    </citation>
    <scope>PHOSPHORYLATION [LARGE SCALE ANALYSIS] AT SER-23</scope>
    <scope>IDENTIFICATION BY MASS SPECTROMETRY [LARGE SCALE ANALYSIS]</scope>
    <source>
        <tissue>Cervix carcinoma</tissue>
    </source>
</reference>
<reference key="10">
    <citation type="journal article" date="2009" name="J. Cell. Biochem.">
        <title>KCTD10 interacts with proliferating cell nuclear antigen and its down-regulation could inhibit cell proliferation.</title>
        <authorList>
            <person name="Wang Y."/>
            <person name="Zheng Y."/>
            <person name="Luo F."/>
            <person name="Fan X."/>
            <person name="Chen J."/>
            <person name="Zhang C."/>
            <person name="Hui R."/>
        </authorList>
    </citation>
    <scope>SUBCELLULAR LOCATION</scope>
    <scope>INTERACTION WITH PCNA</scope>
</reference>
<reference key="11">
    <citation type="journal article" date="2009" name="Mol. Cell">
        <title>Cullin mediates degradation of RhoA through evolutionarily conserved BTB adaptors to control actin cytoskeleton structure and cell movement.</title>
        <authorList>
            <person name="Chen Y."/>
            <person name="Yang Z."/>
            <person name="Meng M."/>
            <person name="Zhao Y."/>
            <person name="Dong N."/>
            <person name="Yan H."/>
            <person name="Liu L."/>
            <person name="Ding M."/>
            <person name="Peng H.B."/>
            <person name="Shao F."/>
        </authorList>
    </citation>
    <scope>IDENTIFICATION</scope>
</reference>
<reference key="12">
    <citation type="journal article" date="2012" name="Proc. Natl. Acad. Sci. U.S.A.">
        <title>N-terminal acetylome analyses and functional insights of the N-terminal acetyltransferase NatB.</title>
        <authorList>
            <person name="Van Damme P."/>
            <person name="Lasa M."/>
            <person name="Polevoda B."/>
            <person name="Gazquez C."/>
            <person name="Elosegui-Artola A."/>
            <person name="Kim D.S."/>
            <person name="De Juan-Pardo E."/>
            <person name="Demeyer K."/>
            <person name="Hole K."/>
            <person name="Larrea E."/>
            <person name="Timmerman E."/>
            <person name="Prieto J."/>
            <person name="Arnesen T."/>
            <person name="Sherman F."/>
            <person name="Gevaert K."/>
            <person name="Aldabe R."/>
        </authorList>
    </citation>
    <scope>ACETYLATION [LARGE SCALE ANALYSIS] AT MET-1</scope>
    <scope>IDENTIFICATION BY MASS SPECTROMETRY [LARGE SCALE ANALYSIS]</scope>
</reference>
<reference key="13">
    <citation type="journal article" date="2013" name="J. Proteome Res.">
        <title>Toward a comprehensive characterization of a human cancer cell phosphoproteome.</title>
        <authorList>
            <person name="Zhou H."/>
            <person name="Di Palma S."/>
            <person name="Preisinger C."/>
            <person name="Peng M."/>
            <person name="Polat A.N."/>
            <person name="Heck A.J."/>
            <person name="Mohammed S."/>
        </authorList>
    </citation>
    <scope>PHOSPHORYLATION [LARGE SCALE ANALYSIS] AT SER-23</scope>
    <scope>IDENTIFICATION BY MASS SPECTROMETRY [LARGE SCALE ANALYSIS]</scope>
    <source>
        <tissue>Cervix carcinoma</tissue>
    </source>
</reference>
<reference key="14">
    <citation type="journal article" date="2017" name="Biochem. J.">
        <title>Structural complexity in the KCTD family of Cullin3-dependent E3 ubiquitin ligases.</title>
        <authorList>
            <person name="Pinkas D.M."/>
            <person name="Sanvitale C.E."/>
            <person name="Bufton J.C."/>
            <person name="Sorrell F.J."/>
            <person name="Solcan N."/>
            <person name="Chalk R."/>
            <person name="Doutch J."/>
            <person name="Bullock A.N."/>
        </authorList>
    </citation>
    <scope>X-RAY CRYSTALLOGRAPHY (2.64 ANGSTROMS) OF 26-135</scope>
    <scope>SUBUNIT</scope>
</reference>
<accession>Q9H3F6</accession>
<accession>Q53HN2</accession>
<accession>Q59FV1</accession>
<accession>Q6PL47</accession>
<accession>Q96SU0</accession>
<gene>
    <name type="primary">KCTD10</name>
    <name type="synonym">ULR061</name>
    <name type="ORF">MSTP028</name>
</gene>
<dbReference type="EMBL" id="AY205299">
    <property type="protein sequence ID" value="AAO47716.1"/>
    <property type="molecule type" value="mRNA"/>
</dbReference>
<dbReference type="EMBL" id="AF113208">
    <property type="protein sequence ID" value="AAG39279.1"/>
    <property type="molecule type" value="mRNA"/>
</dbReference>
<dbReference type="EMBL" id="AY597809">
    <property type="protein sequence ID" value="AAT09002.1"/>
    <property type="molecule type" value="mRNA"/>
</dbReference>
<dbReference type="EMBL" id="AK027543">
    <property type="protein sequence ID" value="BAB55188.1"/>
    <property type="status" value="ALT_INIT"/>
    <property type="molecule type" value="mRNA"/>
</dbReference>
<dbReference type="EMBL" id="AB209358">
    <property type="protein sequence ID" value="BAD92595.1"/>
    <property type="status" value="ALT_INIT"/>
    <property type="molecule type" value="mRNA"/>
</dbReference>
<dbReference type="EMBL" id="AK222548">
    <property type="protein sequence ID" value="BAD96268.1"/>
    <property type="molecule type" value="mRNA"/>
</dbReference>
<dbReference type="EMBL" id="AC007570">
    <property type="status" value="NOT_ANNOTATED_CDS"/>
    <property type="molecule type" value="Genomic_DNA"/>
</dbReference>
<dbReference type="EMBL" id="BC040062">
    <property type="protein sequence ID" value="AAH40062.1"/>
    <property type="molecule type" value="mRNA"/>
</dbReference>
<dbReference type="CCDS" id="CCDS9128.1">
    <molecule id="Q9H3F6-1"/>
</dbReference>
<dbReference type="RefSeq" id="NP_001304324.1">
    <property type="nucleotide sequence ID" value="NM_001317395.1"/>
</dbReference>
<dbReference type="RefSeq" id="NP_001304328.1">
    <molecule id="Q9H3F6-2"/>
    <property type="nucleotide sequence ID" value="NM_001317399.2"/>
</dbReference>
<dbReference type="RefSeq" id="NP_114160.1">
    <molecule id="Q9H3F6-1"/>
    <property type="nucleotide sequence ID" value="NM_031954.5"/>
</dbReference>
<dbReference type="PDB" id="5FTA">
    <property type="method" value="X-ray"/>
    <property type="resolution" value="2.64 A"/>
    <property type="chains" value="A/B/C/D=26-135"/>
</dbReference>
<dbReference type="PDBsum" id="5FTA"/>
<dbReference type="SMR" id="Q9H3F6"/>
<dbReference type="BioGRID" id="123803">
    <property type="interactions" value="214"/>
</dbReference>
<dbReference type="FunCoup" id="Q9H3F6">
    <property type="interactions" value="2108"/>
</dbReference>
<dbReference type="IntAct" id="Q9H3F6">
    <property type="interactions" value="72"/>
</dbReference>
<dbReference type="MINT" id="Q9H3F6"/>
<dbReference type="STRING" id="9606.ENSP00000228495"/>
<dbReference type="iPTMnet" id="Q9H3F6"/>
<dbReference type="PhosphoSitePlus" id="Q9H3F6"/>
<dbReference type="BioMuta" id="KCTD10"/>
<dbReference type="DMDM" id="74733570"/>
<dbReference type="jPOST" id="Q9H3F6"/>
<dbReference type="MassIVE" id="Q9H3F6"/>
<dbReference type="PaxDb" id="9606-ENSP00000228495"/>
<dbReference type="PeptideAtlas" id="Q9H3F6"/>
<dbReference type="ProteomicsDB" id="80705">
    <molecule id="Q9H3F6-1"/>
</dbReference>
<dbReference type="ProteomicsDB" id="80706">
    <molecule id="Q9H3F6-2"/>
</dbReference>
<dbReference type="ProteomicsDB" id="80707">
    <molecule id="Q9H3F6-3"/>
</dbReference>
<dbReference type="Pumba" id="Q9H3F6"/>
<dbReference type="Antibodypedia" id="2841">
    <property type="antibodies" value="118 antibodies from 18 providers"/>
</dbReference>
<dbReference type="DNASU" id="83892"/>
<dbReference type="Ensembl" id="ENST00000228495.11">
    <molecule id="Q9H3F6-1"/>
    <property type="protein sequence ID" value="ENSP00000228495.6"/>
    <property type="gene ID" value="ENSG00000110906.13"/>
</dbReference>
<dbReference type="GeneID" id="83892"/>
<dbReference type="KEGG" id="hsa:83892"/>
<dbReference type="MANE-Select" id="ENST00000228495.11">
    <property type="protein sequence ID" value="ENSP00000228495.6"/>
    <property type="RefSeq nucleotide sequence ID" value="NM_031954.5"/>
    <property type="RefSeq protein sequence ID" value="NP_114160.1"/>
</dbReference>
<dbReference type="UCSC" id="uc001toi.2">
    <molecule id="Q9H3F6-1"/>
    <property type="organism name" value="human"/>
</dbReference>
<dbReference type="AGR" id="HGNC:23236"/>
<dbReference type="CTD" id="83892"/>
<dbReference type="DisGeNET" id="83892"/>
<dbReference type="GeneCards" id="KCTD10"/>
<dbReference type="HGNC" id="HGNC:23236">
    <property type="gene designation" value="KCTD10"/>
</dbReference>
<dbReference type="HPA" id="ENSG00000110906">
    <property type="expression patterns" value="Low tissue specificity"/>
</dbReference>
<dbReference type="MIM" id="613421">
    <property type="type" value="gene"/>
</dbReference>
<dbReference type="neXtProt" id="NX_Q9H3F6"/>
<dbReference type="OpenTargets" id="ENSG00000110906"/>
<dbReference type="PharmGKB" id="PA134938409"/>
<dbReference type="VEuPathDB" id="HostDB:ENSG00000110906"/>
<dbReference type="eggNOG" id="KOG2716">
    <property type="taxonomic scope" value="Eukaryota"/>
</dbReference>
<dbReference type="GeneTree" id="ENSGT00950000183143"/>
<dbReference type="HOGENOM" id="CLU_060008_0_0_1"/>
<dbReference type="InParanoid" id="Q9H3F6"/>
<dbReference type="OMA" id="NGPDQDL"/>
<dbReference type="OrthoDB" id="2333377at2759"/>
<dbReference type="PAN-GO" id="Q9H3F6">
    <property type="GO annotations" value="5 GO annotations based on evolutionary models"/>
</dbReference>
<dbReference type="PhylomeDB" id="Q9H3F6"/>
<dbReference type="TreeFam" id="TF315649"/>
<dbReference type="PathwayCommons" id="Q9H3F6"/>
<dbReference type="SignaLink" id="Q9H3F6"/>
<dbReference type="SIGNOR" id="Q9H3F6"/>
<dbReference type="UniPathway" id="UPA00143"/>
<dbReference type="BioGRID-ORCS" id="83892">
    <property type="hits" value="273 hits in 1211 CRISPR screens"/>
</dbReference>
<dbReference type="ChiTaRS" id="KCTD10">
    <property type="organism name" value="human"/>
</dbReference>
<dbReference type="GenomeRNAi" id="83892"/>
<dbReference type="Pharos" id="Q9H3F6">
    <property type="development level" value="Tbio"/>
</dbReference>
<dbReference type="PRO" id="PR:Q9H3F6"/>
<dbReference type="Proteomes" id="UP000005640">
    <property type="component" value="Chromosome 12"/>
</dbReference>
<dbReference type="RNAct" id="Q9H3F6">
    <property type="molecule type" value="protein"/>
</dbReference>
<dbReference type="Bgee" id="ENSG00000110906">
    <property type="expression patterns" value="Expressed in epithelial cell of pancreas and 182 other cell types or tissues"/>
</dbReference>
<dbReference type="ExpressionAtlas" id="Q9H3F6">
    <property type="expression patterns" value="baseline and differential"/>
</dbReference>
<dbReference type="GO" id="GO:0031463">
    <property type="term" value="C:Cul3-RING ubiquitin ligase complex"/>
    <property type="evidence" value="ECO:0000250"/>
    <property type="project" value="UniProtKB"/>
</dbReference>
<dbReference type="GO" id="GO:0005829">
    <property type="term" value="C:cytosol"/>
    <property type="evidence" value="ECO:0000314"/>
    <property type="project" value="HPA"/>
</dbReference>
<dbReference type="GO" id="GO:0005654">
    <property type="term" value="C:nucleoplasm"/>
    <property type="evidence" value="ECO:0000314"/>
    <property type="project" value="HPA"/>
</dbReference>
<dbReference type="GO" id="GO:0005886">
    <property type="term" value="C:plasma membrane"/>
    <property type="evidence" value="ECO:0000314"/>
    <property type="project" value="HPA"/>
</dbReference>
<dbReference type="GO" id="GO:0042802">
    <property type="term" value="F:identical protein binding"/>
    <property type="evidence" value="ECO:0000353"/>
    <property type="project" value="IntAct"/>
</dbReference>
<dbReference type="GO" id="GO:0005112">
    <property type="term" value="F:Notch binding"/>
    <property type="evidence" value="ECO:0000353"/>
    <property type="project" value="MGI"/>
</dbReference>
<dbReference type="GO" id="GO:0035024">
    <property type="term" value="P:negative regulation of Rho protein signal transduction"/>
    <property type="evidence" value="ECO:0000318"/>
    <property type="project" value="GO_Central"/>
</dbReference>
<dbReference type="GO" id="GO:0043161">
    <property type="term" value="P:proteasome-mediated ubiquitin-dependent protein catabolic process"/>
    <property type="evidence" value="ECO:0000250"/>
    <property type="project" value="UniProtKB"/>
</dbReference>
<dbReference type="GO" id="GO:0051260">
    <property type="term" value="P:protein homooligomerization"/>
    <property type="evidence" value="ECO:0007669"/>
    <property type="project" value="InterPro"/>
</dbReference>
<dbReference type="GO" id="GO:0016567">
    <property type="term" value="P:protein ubiquitination"/>
    <property type="evidence" value="ECO:0000250"/>
    <property type="project" value="UniProtKB"/>
</dbReference>
<dbReference type="GO" id="GO:0006511">
    <property type="term" value="P:ubiquitin-dependent protein catabolic process"/>
    <property type="evidence" value="ECO:0000314"/>
    <property type="project" value="MGI"/>
</dbReference>
<dbReference type="CDD" id="cd18399">
    <property type="entry name" value="BTB_POZ_KCTD10_BACURD3"/>
    <property type="match status" value="1"/>
</dbReference>
<dbReference type="FunFam" id="3.30.710.10:FF:000013">
    <property type="entry name" value="BTB/POZ domain-containing adapter for CUL3-mediated RhoA degradation protein 3"/>
    <property type="match status" value="1"/>
</dbReference>
<dbReference type="Gene3D" id="3.30.710.10">
    <property type="entry name" value="Potassium Channel Kv1.1, Chain A"/>
    <property type="match status" value="1"/>
</dbReference>
<dbReference type="InterPro" id="IPR045068">
    <property type="entry name" value="BACURD1-3"/>
</dbReference>
<dbReference type="InterPro" id="IPR000210">
    <property type="entry name" value="BTB/POZ_dom"/>
</dbReference>
<dbReference type="InterPro" id="IPR011333">
    <property type="entry name" value="SKP1/BTB/POZ_sf"/>
</dbReference>
<dbReference type="InterPro" id="IPR003131">
    <property type="entry name" value="T1-type_BTB"/>
</dbReference>
<dbReference type="PANTHER" id="PTHR11145">
    <property type="entry name" value="BTB/POZ DOMAIN-CONTAINING ADAPTER FOR CUL3-MEDIATED RHOA DEGRADATION PROTEIN FAMILY MEMBER"/>
    <property type="match status" value="1"/>
</dbReference>
<dbReference type="PANTHER" id="PTHR11145:SF14">
    <property type="entry name" value="BTB_POZ DOMAIN-CONTAINING ADAPTER FOR CUL3-MEDIATED RHOA DEGRADATION PROTEIN 3"/>
    <property type="match status" value="1"/>
</dbReference>
<dbReference type="Pfam" id="PF02214">
    <property type="entry name" value="BTB_2"/>
    <property type="match status" value="1"/>
</dbReference>
<dbReference type="SMART" id="SM00225">
    <property type="entry name" value="BTB"/>
    <property type="match status" value="1"/>
</dbReference>
<dbReference type="SUPFAM" id="SSF54695">
    <property type="entry name" value="POZ domain"/>
    <property type="match status" value="1"/>
</dbReference>
<dbReference type="PROSITE" id="PS50097">
    <property type="entry name" value="BTB"/>
    <property type="match status" value="1"/>
</dbReference>